<reference key="1">
    <citation type="journal article" date="1995" name="DNA Res.">
        <title>Sequence analysis of the genome of the unicellular cyanobacterium Synechocystis sp. strain PCC6803. I. Sequence features in the 1 Mb region from map positions 64% to 92% of the genome.</title>
        <authorList>
            <person name="Kaneko T."/>
            <person name="Tanaka A."/>
            <person name="Sato S."/>
            <person name="Kotani H."/>
            <person name="Sazuka T."/>
            <person name="Miyajima N."/>
            <person name="Sugiura M."/>
            <person name="Tabata S."/>
        </authorList>
    </citation>
    <scope>NUCLEOTIDE SEQUENCE [LARGE SCALE GENOMIC DNA]</scope>
    <source>
        <strain>ATCC 27184 / PCC 6803 / N-1</strain>
    </source>
</reference>
<reference key="2">
    <citation type="journal article" date="1996" name="DNA Res.">
        <title>Sequence analysis of the genome of the unicellular cyanobacterium Synechocystis sp. strain PCC6803. II. Sequence determination of the entire genome and assignment of potential protein-coding regions.</title>
        <authorList>
            <person name="Kaneko T."/>
            <person name="Sato S."/>
            <person name="Kotani H."/>
            <person name="Tanaka A."/>
            <person name="Asamizu E."/>
            <person name="Nakamura Y."/>
            <person name="Miyajima N."/>
            <person name="Hirosawa M."/>
            <person name="Sugiura M."/>
            <person name="Sasamoto S."/>
            <person name="Kimura T."/>
            <person name="Hosouchi T."/>
            <person name="Matsuno A."/>
            <person name="Muraki A."/>
            <person name="Nakazaki N."/>
            <person name="Naruo K."/>
            <person name="Okumura S."/>
            <person name="Shimpo S."/>
            <person name="Takeuchi C."/>
            <person name="Wada T."/>
            <person name="Watanabe A."/>
            <person name="Yamada M."/>
            <person name="Yasuda M."/>
            <person name="Tabata S."/>
        </authorList>
    </citation>
    <scope>NUCLEOTIDE SEQUENCE [LARGE SCALE GENOMIC DNA]</scope>
    <source>
        <strain>ATCC 27184 / PCC 6803 / Kazusa</strain>
    </source>
</reference>
<name>APBC_SYNY3</name>
<evidence type="ECO:0000255" key="1">
    <source>
        <dbReference type="HAMAP-Rule" id="MF_02040"/>
    </source>
</evidence>
<evidence type="ECO:0000305" key="2"/>
<keyword id="KW-0067">ATP-binding</keyword>
<keyword id="KW-0378">Hydrolase</keyword>
<keyword id="KW-0408">Iron</keyword>
<keyword id="KW-0411">Iron-sulfur</keyword>
<keyword id="KW-0479">Metal-binding</keyword>
<keyword id="KW-0547">Nucleotide-binding</keyword>
<keyword id="KW-1185">Reference proteome</keyword>
<feature type="chain" id="PRO_0000184942" description="Iron-sulfur cluster carrier protein">
    <location>
        <begin position="1"/>
        <end position="353"/>
    </location>
</feature>
<feature type="binding site" evidence="1">
    <location>
        <begin position="105"/>
        <end position="112"/>
    </location>
    <ligand>
        <name>ATP</name>
        <dbReference type="ChEBI" id="CHEBI:30616"/>
    </ligand>
</feature>
<protein>
    <recommendedName>
        <fullName evidence="1">Iron-sulfur cluster carrier protein</fullName>
    </recommendedName>
</protein>
<gene>
    <name type="primary">mrp</name>
    <name type="ordered locus">slr0067</name>
</gene>
<dbReference type="EMBL" id="BA000022">
    <property type="protein sequence ID" value="BAA10297.1"/>
    <property type="molecule type" value="Genomic_DNA"/>
</dbReference>
<dbReference type="PIR" id="S74379">
    <property type="entry name" value="S74379"/>
</dbReference>
<dbReference type="SMR" id="P53383"/>
<dbReference type="FunCoup" id="P53383">
    <property type="interactions" value="390"/>
</dbReference>
<dbReference type="IntAct" id="P53383">
    <property type="interactions" value="1"/>
</dbReference>
<dbReference type="STRING" id="1148.gene:10499797"/>
<dbReference type="PaxDb" id="1148-1001155"/>
<dbReference type="EnsemblBacteria" id="BAA10297">
    <property type="protein sequence ID" value="BAA10297"/>
    <property type="gene ID" value="BAA10297"/>
</dbReference>
<dbReference type="KEGG" id="syn:slr0067"/>
<dbReference type="eggNOG" id="COG0489">
    <property type="taxonomic scope" value="Bacteria"/>
</dbReference>
<dbReference type="InParanoid" id="P53383"/>
<dbReference type="PhylomeDB" id="P53383"/>
<dbReference type="Proteomes" id="UP000001425">
    <property type="component" value="Chromosome"/>
</dbReference>
<dbReference type="GO" id="GO:0051539">
    <property type="term" value="F:4 iron, 4 sulfur cluster binding"/>
    <property type="evidence" value="ECO:0000318"/>
    <property type="project" value="GO_Central"/>
</dbReference>
<dbReference type="GO" id="GO:0005524">
    <property type="term" value="F:ATP binding"/>
    <property type="evidence" value="ECO:0007669"/>
    <property type="project" value="UniProtKB-UniRule"/>
</dbReference>
<dbReference type="GO" id="GO:0016887">
    <property type="term" value="F:ATP hydrolysis activity"/>
    <property type="evidence" value="ECO:0007669"/>
    <property type="project" value="UniProtKB-UniRule"/>
</dbReference>
<dbReference type="GO" id="GO:0140663">
    <property type="term" value="F:ATP-dependent FeS chaperone activity"/>
    <property type="evidence" value="ECO:0007669"/>
    <property type="project" value="InterPro"/>
</dbReference>
<dbReference type="GO" id="GO:0046872">
    <property type="term" value="F:metal ion binding"/>
    <property type="evidence" value="ECO:0007669"/>
    <property type="project" value="UniProtKB-KW"/>
</dbReference>
<dbReference type="GO" id="GO:0016226">
    <property type="term" value="P:iron-sulfur cluster assembly"/>
    <property type="evidence" value="ECO:0000318"/>
    <property type="project" value="GO_Central"/>
</dbReference>
<dbReference type="CDD" id="cd02037">
    <property type="entry name" value="Mrp_NBP35"/>
    <property type="match status" value="1"/>
</dbReference>
<dbReference type="FunFam" id="3.30.300.130:FF:000020">
    <property type="entry name" value="Iron-sulfur cluster carrier protein"/>
    <property type="match status" value="1"/>
</dbReference>
<dbReference type="FunFam" id="3.40.50.300:FF:000304">
    <property type="entry name" value="Iron-sulfur cluster carrier protein"/>
    <property type="match status" value="1"/>
</dbReference>
<dbReference type="Gene3D" id="3.30.300.130">
    <property type="entry name" value="Fe-S cluster assembly (FSCA)"/>
    <property type="match status" value="1"/>
</dbReference>
<dbReference type="Gene3D" id="3.40.50.300">
    <property type="entry name" value="P-loop containing nucleotide triphosphate hydrolases"/>
    <property type="match status" value="1"/>
</dbReference>
<dbReference type="HAMAP" id="MF_02040">
    <property type="entry name" value="Mrp_NBP35"/>
    <property type="match status" value="1"/>
</dbReference>
<dbReference type="InterPro" id="IPR034904">
    <property type="entry name" value="FSCA_dom_sf"/>
</dbReference>
<dbReference type="InterPro" id="IPR002744">
    <property type="entry name" value="MIP18-like"/>
</dbReference>
<dbReference type="InterPro" id="IPR000808">
    <property type="entry name" value="Mrp-like_CS"/>
</dbReference>
<dbReference type="InterPro" id="IPR019591">
    <property type="entry name" value="Mrp/NBP35_ATP-bd"/>
</dbReference>
<dbReference type="InterPro" id="IPR044304">
    <property type="entry name" value="NUBPL-like"/>
</dbReference>
<dbReference type="InterPro" id="IPR027417">
    <property type="entry name" value="P-loop_NTPase"/>
</dbReference>
<dbReference type="InterPro" id="IPR033756">
    <property type="entry name" value="YlxH/NBP35"/>
</dbReference>
<dbReference type="PANTHER" id="PTHR42961">
    <property type="entry name" value="IRON-SULFUR PROTEIN NUBPL"/>
    <property type="match status" value="1"/>
</dbReference>
<dbReference type="PANTHER" id="PTHR42961:SF2">
    <property type="entry name" value="IRON-SULFUR PROTEIN NUBPL"/>
    <property type="match status" value="1"/>
</dbReference>
<dbReference type="Pfam" id="PF01883">
    <property type="entry name" value="FeS_assembly_P"/>
    <property type="match status" value="1"/>
</dbReference>
<dbReference type="Pfam" id="PF10609">
    <property type="entry name" value="ParA"/>
    <property type="match status" value="1"/>
</dbReference>
<dbReference type="SUPFAM" id="SSF117916">
    <property type="entry name" value="Fe-S cluster assembly (FSCA) domain-like"/>
    <property type="match status" value="1"/>
</dbReference>
<dbReference type="SUPFAM" id="SSF52540">
    <property type="entry name" value="P-loop containing nucleoside triphosphate hydrolases"/>
    <property type="match status" value="1"/>
</dbReference>
<dbReference type="PROSITE" id="PS01215">
    <property type="entry name" value="MRP"/>
    <property type="match status" value="1"/>
</dbReference>
<proteinExistence type="inferred from homology"/>
<accession>P53383</accession>
<organism>
    <name type="scientific">Synechocystis sp. (strain ATCC 27184 / PCC 6803 / Kazusa)</name>
    <dbReference type="NCBI Taxonomy" id="1111708"/>
    <lineage>
        <taxon>Bacteria</taxon>
        <taxon>Bacillati</taxon>
        <taxon>Cyanobacteriota</taxon>
        <taxon>Cyanophyceae</taxon>
        <taxon>Synechococcales</taxon>
        <taxon>Merismopediaceae</taxon>
        <taxon>Synechocystis</taxon>
    </lineage>
</organism>
<sequence length="353" mass="37131">MLTTDAVLTVLRPVQDPELQKSLVELNMIRDVAIAGGTVSFTLVLTTPACPLREFIVEDCEKAVKTLPGVEKVEVKVTAETPQQKSLPDRQSVGQVKNIIAISSGKGGVGKSTVAVNVAVALAQTGAAVGLLDADIYGPNAPTMLGLSGAAVQVQNSPQGEVLEPVFNHGIKMVSMGFLIDPDQPVIWRGPMLNGIIRQFLYQVNWGALDYLIVDMPPGTGDAQLTLTQSVPMAGAVIVTTPQTVSLLDARRGLKMFQQMGVNVLGIVENMSYFIPPDLPDRQYDLFGSGGGEKASKELNVPLLGCVPLEIGLREGGDKGVPIVVSQPESASAKALTAIAKQIAGKVSMAALV</sequence>
<comment type="function">
    <text evidence="1">Binds and transfers iron-sulfur (Fe-S) clusters to target apoproteins. Can hydrolyze ATP.</text>
</comment>
<comment type="subunit">
    <text evidence="1">Homodimer.</text>
</comment>
<comment type="similarity">
    <text evidence="2">In the N-terminal section; belongs to the MIP18 family.</text>
</comment>
<comment type="similarity">
    <text evidence="2">In the C-terminal section; belongs to the Mrp/NBP35 ATP-binding proteins family.</text>
</comment>